<sequence length="552" mass="62313">MDTKRLILFVIFSFSILMLWDSWQRDQQPPAASQTQTTAQSVEDGSVPQAAKSSASAANQASVPAETGFRLQSAERINVETDLYKASIDTIGGDLRRLELREHKDDEDQTKNFVLMDDQSAPMLYVAQTGLIGNGLPTHKEVFTSESTNYQLAPGEDKLDVRLTWKGDNGVEVHKIYTFRRDSYAIEVSYEIRNNSDTAVDPSVYYQIVHDNQSHQGSYMMPTFTGGAYYTEADKYKKLSFSDMAKTNLSKNASDGWVGLVQHYFVSAWIPEDGLVREFYTKKLSDNVYSIGSVSPLGNIAPGQSVTLKSRLYAGPQTQSELKSVAPGLEYTVDYGWLTVIATPLFWILSSIQKVVHNWGVAIILLTILIKLVFYPLSAASYRSMANMRELAPRLQRLKEQYGDDRQKLHQAMMEMYKTEKINPMGGCLPILVQIPVFIALYWVLLGSVEMRHAPFMLWIQDLSAVDPYYVLPILMGITMIIQTKLNPKPADPIQAKVMTIMPIVFSVFFFFFPAGLVLYWLVNNILSIAQQWYINRSTERAAAKKKGNARR</sequence>
<keyword id="KW-0997">Cell inner membrane</keyword>
<keyword id="KW-1003">Cell membrane</keyword>
<keyword id="KW-0143">Chaperone</keyword>
<keyword id="KW-0472">Membrane</keyword>
<keyword id="KW-0653">Protein transport</keyword>
<keyword id="KW-1185">Reference proteome</keyword>
<keyword id="KW-0812">Transmembrane</keyword>
<keyword id="KW-1133">Transmembrane helix</keyword>
<keyword id="KW-0813">Transport</keyword>
<dbReference type="EMBL" id="CP000284">
    <property type="protein sequence ID" value="ABE51021.1"/>
    <property type="molecule type" value="Genomic_DNA"/>
</dbReference>
<dbReference type="RefSeq" id="WP_011480974.1">
    <property type="nucleotide sequence ID" value="NC_007947.1"/>
</dbReference>
<dbReference type="SMR" id="Q1GXL6"/>
<dbReference type="STRING" id="265072.Mfla_2758"/>
<dbReference type="KEGG" id="mfa:Mfla_2758"/>
<dbReference type="eggNOG" id="COG0706">
    <property type="taxonomic scope" value="Bacteria"/>
</dbReference>
<dbReference type="HOGENOM" id="CLU_016535_3_0_4"/>
<dbReference type="OrthoDB" id="9780552at2"/>
<dbReference type="Proteomes" id="UP000002440">
    <property type="component" value="Chromosome"/>
</dbReference>
<dbReference type="GO" id="GO:0005886">
    <property type="term" value="C:plasma membrane"/>
    <property type="evidence" value="ECO:0007669"/>
    <property type="project" value="UniProtKB-SubCell"/>
</dbReference>
<dbReference type="GO" id="GO:0032977">
    <property type="term" value="F:membrane insertase activity"/>
    <property type="evidence" value="ECO:0007669"/>
    <property type="project" value="InterPro"/>
</dbReference>
<dbReference type="GO" id="GO:0051205">
    <property type="term" value="P:protein insertion into membrane"/>
    <property type="evidence" value="ECO:0007669"/>
    <property type="project" value="TreeGrafter"/>
</dbReference>
<dbReference type="GO" id="GO:0015031">
    <property type="term" value="P:protein transport"/>
    <property type="evidence" value="ECO:0007669"/>
    <property type="project" value="UniProtKB-KW"/>
</dbReference>
<dbReference type="CDD" id="cd20070">
    <property type="entry name" value="5TM_YidC_Alb3"/>
    <property type="match status" value="1"/>
</dbReference>
<dbReference type="CDD" id="cd19961">
    <property type="entry name" value="EcYidC-like_peri"/>
    <property type="match status" value="1"/>
</dbReference>
<dbReference type="Gene3D" id="2.70.98.90">
    <property type="match status" value="1"/>
</dbReference>
<dbReference type="HAMAP" id="MF_01810">
    <property type="entry name" value="YidC_type1"/>
    <property type="match status" value="1"/>
</dbReference>
<dbReference type="InterPro" id="IPR019998">
    <property type="entry name" value="Membr_insert_YidC"/>
</dbReference>
<dbReference type="InterPro" id="IPR028053">
    <property type="entry name" value="Membr_insert_YidC_N"/>
</dbReference>
<dbReference type="InterPro" id="IPR001708">
    <property type="entry name" value="YidC/ALB3/OXA1/COX18"/>
</dbReference>
<dbReference type="InterPro" id="IPR028055">
    <property type="entry name" value="YidC/Oxa/ALB_C"/>
</dbReference>
<dbReference type="InterPro" id="IPR047196">
    <property type="entry name" value="YidC_ALB_C"/>
</dbReference>
<dbReference type="InterPro" id="IPR038221">
    <property type="entry name" value="YidC_periplasmic_sf"/>
</dbReference>
<dbReference type="NCBIfam" id="NF002352">
    <property type="entry name" value="PRK01318.1-3"/>
    <property type="match status" value="1"/>
</dbReference>
<dbReference type="NCBIfam" id="NF002353">
    <property type="entry name" value="PRK01318.1-4"/>
    <property type="match status" value="1"/>
</dbReference>
<dbReference type="NCBIfam" id="TIGR03593">
    <property type="entry name" value="yidC_nterm"/>
    <property type="match status" value="1"/>
</dbReference>
<dbReference type="NCBIfam" id="TIGR03592">
    <property type="entry name" value="yidC_oxa1_cterm"/>
    <property type="match status" value="1"/>
</dbReference>
<dbReference type="PANTHER" id="PTHR12428:SF65">
    <property type="entry name" value="CYTOCHROME C OXIDASE ASSEMBLY PROTEIN COX18, MITOCHONDRIAL"/>
    <property type="match status" value="1"/>
</dbReference>
<dbReference type="PANTHER" id="PTHR12428">
    <property type="entry name" value="OXA1"/>
    <property type="match status" value="1"/>
</dbReference>
<dbReference type="Pfam" id="PF02096">
    <property type="entry name" value="60KD_IMP"/>
    <property type="match status" value="1"/>
</dbReference>
<dbReference type="Pfam" id="PF14849">
    <property type="entry name" value="YidC_periplas"/>
    <property type="match status" value="1"/>
</dbReference>
<dbReference type="PRINTS" id="PR00701">
    <property type="entry name" value="60KDINNERMP"/>
</dbReference>
<dbReference type="PRINTS" id="PR01900">
    <property type="entry name" value="YIDCPROTEIN"/>
</dbReference>
<evidence type="ECO:0000255" key="1">
    <source>
        <dbReference type="HAMAP-Rule" id="MF_01810"/>
    </source>
</evidence>
<evidence type="ECO:0000256" key="2">
    <source>
        <dbReference type="SAM" id="MobiDB-lite"/>
    </source>
</evidence>
<protein>
    <recommendedName>
        <fullName evidence="1">Membrane protein insertase YidC</fullName>
    </recommendedName>
    <alternativeName>
        <fullName evidence="1">Foldase YidC</fullName>
    </alternativeName>
    <alternativeName>
        <fullName evidence="1">Membrane integrase YidC</fullName>
    </alternativeName>
    <alternativeName>
        <fullName evidence="1">Membrane protein YidC</fullName>
    </alternativeName>
</protein>
<gene>
    <name evidence="1" type="primary">yidC</name>
    <name type="ordered locus">Mfla_2758</name>
</gene>
<reference key="1">
    <citation type="submission" date="2006-03" db="EMBL/GenBank/DDBJ databases">
        <title>Complete sequence of Methylobacillus flagellatus KT.</title>
        <authorList>
            <consortium name="US DOE Joint Genome Institute"/>
            <person name="Copeland A."/>
            <person name="Lucas S."/>
            <person name="Lapidus A."/>
            <person name="Barry K."/>
            <person name="Detter J.C."/>
            <person name="Glavina del Rio T."/>
            <person name="Hammon N."/>
            <person name="Israni S."/>
            <person name="Dalin E."/>
            <person name="Tice H."/>
            <person name="Pitluck S."/>
            <person name="Brettin T."/>
            <person name="Bruce D."/>
            <person name="Han C."/>
            <person name="Tapia R."/>
            <person name="Saunders E."/>
            <person name="Gilna P."/>
            <person name="Schmutz J."/>
            <person name="Larimer F."/>
            <person name="Land M."/>
            <person name="Kyrpides N."/>
            <person name="Anderson I."/>
            <person name="Richardson P."/>
        </authorList>
    </citation>
    <scope>NUCLEOTIDE SEQUENCE [LARGE SCALE GENOMIC DNA]</scope>
    <source>
        <strain>ATCC 51484 / DSM 6875 / VKM B-1610 / KT</strain>
    </source>
</reference>
<accession>Q1GXL6</accession>
<comment type="function">
    <text evidence="1">Required for the insertion and/or proper folding and/or complex formation of integral membrane proteins into the membrane. Involved in integration of membrane proteins that insert both dependently and independently of the Sec translocase complex, as well as at least some lipoproteins. Aids folding of multispanning membrane proteins.</text>
</comment>
<comment type="subunit">
    <text evidence="1">Interacts with the Sec translocase complex via SecD. Specifically interacts with transmembrane segments of nascent integral membrane proteins during membrane integration.</text>
</comment>
<comment type="subcellular location">
    <subcellularLocation>
        <location evidence="1">Cell inner membrane</location>
        <topology evidence="1">Multi-pass membrane protein</topology>
    </subcellularLocation>
</comment>
<comment type="similarity">
    <text evidence="1">Belongs to the OXA1/ALB3/YidC family. Type 1 subfamily.</text>
</comment>
<feature type="chain" id="PRO_1000070123" description="Membrane protein insertase YidC">
    <location>
        <begin position="1"/>
        <end position="552"/>
    </location>
</feature>
<feature type="transmembrane region" description="Helical" evidence="1">
    <location>
        <begin position="3"/>
        <end position="23"/>
    </location>
</feature>
<feature type="transmembrane region" description="Helical" evidence="1">
    <location>
        <begin position="359"/>
        <end position="379"/>
    </location>
</feature>
<feature type="transmembrane region" description="Helical" evidence="1">
    <location>
        <begin position="429"/>
        <end position="449"/>
    </location>
</feature>
<feature type="transmembrane region" description="Helical" evidence="1">
    <location>
        <begin position="463"/>
        <end position="483"/>
    </location>
</feature>
<feature type="transmembrane region" description="Helical" evidence="1">
    <location>
        <begin position="503"/>
        <end position="523"/>
    </location>
</feature>
<feature type="region of interest" description="Disordered" evidence="2">
    <location>
        <begin position="29"/>
        <end position="65"/>
    </location>
</feature>
<organism>
    <name type="scientific">Methylobacillus flagellatus (strain ATCC 51484 / DSM 6875 / VKM B-1610 / KT)</name>
    <dbReference type="NCBI Taxonomy" id="265072"/>
    <lineage>
        <taxon>Bacteria</taxon>
        <taxon>Pseudomonadati</taxon>
        <taxon>Pseudomonadota</taxon>
        <taxon>Betaproteobacteria</taxon>
        <taxon>Nitrosomonadales</taxon>
        <taxon>Methylophilaceae</taxon>
        <taxon>Methylobacillus</taxon>
    </lineage>
</organism>
<name>YIDC_METFK</name>
<proteinExistence type="inferred from homology"/>